<accession>Q3ZXW0</accession>
<comment type="function">
    <text evidence="1">Catalyzes the transfer of the diacylglyceryl group from phosphatidylglycerol to the sulfhydryl group of the N-terminal cysteine of a prolipoprotein, the first step in the formation of mature lipoproteins.</text>
</comment>
<comment type="catalytic activity">
    <reaction evidence="1">
        <text>L-cysteinyl-[prolipoprotein] + a 1,2-diacyl-sn-glycero-3-phospho-(1'-sn-glycerol) = an S-1,2-diacyl-sn-glyceryl-L-cysteinyl-[prolipoprotein] + sn-glycerol 1-phosphate + H(+)</text>
        <dbReference type="Rhea" id="RHEA:56712"/>
        <dbReference type="Rhea" id="RHEA-COMP:14679"/>
        <dbReference type="Rhea" id="RHEA-COMP:14680"/>
        <dbReference type="ChEBI" id="CHEBI:15378"/>
        <dbReference type="ChEBI" id="CHEBI:29950"/>
        <dbReference type="ChEBI" id="CHEBI:57685"/>
        <dbReference type="ChEBI" id="CHEBI:64716"/>
        <dbReference type="ChEBI" id="CHEBI:140658"/>
        <dbReference type="EC" id="2.5.1.145"/>
    </reaction>
</comment>
<comment type="pathway">
    <text evidence="1">Protein modification; lipoprotein biosynthesis (diacylglyceryl transfer).</text>
</comment>
<comment type="subcellular location">
    <subcellularLocation>
        <location evidence="1">Cell membrane</location>
        <topology evidence="1">Multi-pass membrane protein</topology>
    </subcellularLocation>
</comment>
<comment type="similarity">
    <text evidence="1">Belongs to the Lgt family.</text>
</comment>
<feature type="chain" id="PRO_1000065473" description="Phosphatidylglycerol--prolipoprotein diacylglyceryl transferase">
    <location>
        <begin position="1"/>
        <end position="260"/>
    </location>
</feature>
<feature type="transmembrane region" description="Helical" evidence="1">
    <location>
        <begin position="17"/>
        <end position="37"/>
    </location>
</feature>
<feature type="transmembrane region" description="Helical" evidence="1">
    <location>
        <begin position="52"/>
        <end position="72"/>
    </location>
</feature>
<feature type="transmembrane region" description="Helical" evidence="1">
    <location>
        <begin position="85"/>
        <end position="105"/>
    </location>
</feature>
<feature type="transmembrane region" description="Helical" evidence="1">
    <location>
        <begin position="113"/>
        <end position="133"/>
    </location>
</feature>
<feature type="transmembrane region" description="Helical" evidence="1">
    <location>
        <begin position="170"/>
        <end position="190"/>
    </location>
</feature>
<feature type="transmembrane region" description="Helical" evidence="1">
    <location>
        <begin position="198"/>
        <end position="218"/>
    </location>
</feature>
<feature type="transmembrane region" description="Helical" evidence="1">
    <location>
        <begin position="227"/>
        <end position="247"/>
    </location>
</feature>
<feature type="binding site" evidence="1">
    <location>
        <position position="134"/>
    </location>
    <ligand>
        <name>a 1,2-diacyl-sn-glycero-3-phospho-(1'-sn-glycerol)</name>
        <dbReference type="ChEBI" id="CHEBI:64716"/>
    </ligand>
</feature>
<evidence type="ECO:0000255" key="1">
    <source>
        <dbReference type="HAMAP-Rule" id="MF_01147"/>
    </source>
</evidence>
<dbReference type="EC" id="2.5.1.145" evidence="1"/>
<dbReference type="EMBL" id="AJ965256">
    <property type="protein sequence ID" value="CAI83056.1"/>
    <property type="molecule type" value="Genomic_DNA"/>
</dbReference>
<dbReference type="RefSeq" id="WP_011309407.1">
    <property type="nucleotide sequence ID" value="NC_007356.1"/>
</dbReference>
<dbReference type="SMR" id="Q3ZXW0"/>
<dbReference type="KEGG" id="deh:cbdbA926"/>
<dbReference type="HOGENOM" id="CLU_013386_0_1_0"/>
<dbReference type="UniPathway" id="UPA00664"/>
<dbReference type="Proteomes" id="UP000000433">
    <property type="component" value="Chromosome"/>
</dbReference>
<dbReference type="GO" id="GO:0005886">
    <property type="term" value="C:plasma membrane"/>
    <property type="evidence" value="ECO:0007669"/>
    <property type="project" value="UniProtKB-SubCell"/>
</dbReference>
<dbReference type="GO" id="GO:0008961">
    <property type="term" value="F:phosphatidylglycerol-prolipoprotein diacylglyceryl transferase activity"/>
    <property type="evidence" value="ECO:0007669"/>
    <property type="project" value="UniProtKB-UniRule"/>
</dbReference>
<dbReference type="GO" id="GO:0042158">
    <property type="term" value="P:lipoprotein biosynthetic process"/>
    <property type="evidence" value="ECO:0007669"/>
    <property type="project" value="UniProtKB-UniRule"/>
</dbReference>
<dbReference type="HAMAP" id="MF_01147">
    <property type="entry name" value="Lgt"/>
    <property type="match status" value="1"/>
</dbReference>
<dbReference type="InterPro" id="IPR001640">
    <property type="entry name" value="Lgt"/>
</dbReference>
<dbReference type="PANTHER" id="PTHR30589:SF0">
    <property type="entry name" value="PHOSPHATIDYLGLYCEROL--PROLIPOPROTEIN DIACYLGLYCERYL TRANSFERASE"/>
    <property type="match status" value="1"/>
</dbReference>
<dbReference type="PANTHER" id="PTHR30589">
    <property type="entry name" value="PROLIPOPROTEIN DIACYLGLYCERYL TRANSFERASE"/>
    <property type="match status" value="1"/>
</dbReference>
<dbReference type="Pfam" id="PF01790">
    <property type="entry name" value="LGT"/>
    <property type="match status" value="1"/>
</dbReference>
<name>LGT_DEHMC</name>
<sequence length="260" mass="28397">MFEINVDPVAFSIGSLVVKWYGIMMALGVVALVSWIFWRIKRGANISYDTVLTAAIIAIPSGIVFAKLLHVIDAWEYYSLNPGAIFSGEGLTIFGAIIGATIGLWIYSRYSHFNLGYLLDVAVPGILLGQAIGRVGCLLNGCCYGEFGGTGCSVIYTNPATAAPYGVEVAPTQAYEIIFLLCLLTFSLFIAKKLRPDGQLFLLYISLYAAWRVAIGFVRVNDDFALGLEQAQVVGLILMAVAVPLFIYRLRKQKQTDKIT</sequence>
<reference key="1">
    <citation type="journal article" date="2005" name="Nat. Biotechnol.">
        <title>Genome sequence of the chlorinated compound-respiring bacterium Dehalococcoides species strain CBDB1.</title>
        <authorList>
            <person name="Kube M."/>
            <person name="Beck A."/>
            <person name="Zinder S.H."/>
            <person name="Kuhl H."/>
            <person name="Reinhardt R."/>
            <person name="Adrian L."/>
        </authorList>
    </citation>
    <scope>NUCLEOTIDE SEQUENCE [LARGE SCALE GENOMIC DNA]</scope>
    <source>
        <strain>CBDB1</strain>
    </source>
</reference>
<protein>
    <recommendedName>
        <fullName evidence="1">Phosphatidylglycerol--prolipoprotein diacylglyceryl transferase</fullName>
        <ecNumber evidence="1">2.5.1.145</ecNumber>
    </recommendedName>
</protein>
<organism>
    <name type="scientific">Dehalococcoides mccartyi (strain CBDB1)</name>
    <dbReference type="NCBI Taxonomy" id="255470"/>
    <lineage>
        <taxon>Bacteria</taxon>
        <taxon>Bacillati</taxon>
        <taxon>Chloroflexota</taxon>
        <taxon>Dehalococcoidia</taxon>
        <taxon>Dehalococcoidales</taxon>
        <taxon>Dehalococcoidaceae</taxon>
        <taxon>Dehalococcoides</taxon>
    </lineage>
</organism>
<gene>
    <name evidence="1" type="primary">lgt</name>
    <name type="ordered locus">cbdbA926</name>
</gene>
<keyword id="KW-1003">Cell membrane</keyword>
<keyword id="KW-0472">Membrane</keyword>
<keyword id="KW-0808">Transferase</keyword>
<keyword id="KW-0812">Transmembrane</keyword>
<keyword id="KW-1133">Transmembrane helix</keyword>
<proteinExistence type="inferred from homology"/>